<proteinExistence type="evidence at protein level"/>
<dbReference type="EMBL" id="AJ487960">
    <property type="protein sequence ID" value="CAD32307.1"/>
    <property type="molecule type" value="mRNA"/>
</dbReference>
<dbReference type="EMBL" id="AJ487521">
    <property type="protein sequence ID" value="CAD31789.1"/>
    <property type="molecule type" value="mRNA"/>
</dbReference>
<dbReference type="CCDS" id="CCDS21124.1"/>
<dbReference type="RefSeq" id="NP_653139.2">
    <property type="nucleotide sequence ID" value="NM_144556.2"/>
</dbReference>
<dbReference type="SMR" id="Q8K1S1"/>
<dbReference type="FunCoup" id="Q8K1S1">
    <property type="interactions" value="298"/>
</dbReference>
<dbReference type="STRING" id="10090.ENSMUSP00000041579"/>
<dbReference type="GlyCosmos" id="Q8K1S1">
    <property type="glycosylation" value="1 site, No reported glycans"/>
</dbReference>
<dbReference type="GlyGen" id="Q8K1S1">
    <property type="glycosylation" value="1 site"/>
</dbReference>
<dbReference type="PhosphoSitePlus" id="Q8K1S1"/>
<dbReference type="PaxDb" id="10090-ENSMUSP00000041579"/>
<dbReference type="ProteomicsDB" id="286190"/>
<dbReference type="Antibodypedia" id="29282">
    <property type="antibodies" value="160 antibodies from 26 providers"/>
</dbReference>
<dbReference type="DNASU" id="243914"/>
<dbReference type="Ensembl" id="ENSMUST00000039775.9">
    <property type="protein sequence ID" value="ENSMUSP00000041579.8"/>
    <property type="gene ID" value="ENSMUSG00000036560.15"/>
</dbReference>
<dbReference type="GeneID" id="243914"/>
<dbReference type="KEGG" id="mmu:243914"/>
<dbReference type="UCSC" id="uc009ghz.1">
    <property type="organism name" value="mouse"/>
</dbReference>
<dbReference type="AGR" id="MGI:2180197"/>
<dbReference type="CTD" id="163175"/>
<dbReference type="MGI" id="MGI:2180197">
    <property type="gene designation" value="Lgi4"/>
</dbReference>
<dbReference type="VEuPathDB" id="HostDB:ENSMUSG00000036560"/>
<dbReference type="eggNOG" id="ENOG502SHYJ">
    <property type="taxonomic scope" value="Eukaryota"/>
</dbReference>
<dbReference type="GeneTree" id="ENSGT00940000162018"/>
<dbReference type="HOGENOM" id="CLU_036403_0_0_1"/>
<dbReference type="InParanoid" id="Q8K1S1"/>
<dbReference type="OMA" id="WLLQWMA"/>
<dbReference type="OrthoDB" id="546383at2759"/>
<dbReference type="PhylomeDB" id="Q8K1S1"/>
<dbReference type="TreeFam" id="TF333155"/>
<dbReference type="Reactome" id="R-MMU-5682910">
    <property type="pathway name" value="LGI-ADAM interactions"/>
</dbReference>
<dbReference type="BioGRID-ORCS" id="243914">
    <property type="hits" value="6 hits in 75 CRISPR screens"/>
</dbReference>
<dbReference type="ChiTaRS" id="Lgi4">
    <property type="organism name" value="mouse"/>
</dbReference>
<dbReference type="PRO" id="PR:Q8K1S1"/>
<dbReference type="Proteomes" id="UP000000589">
    <property type="component" value="Chromosome 7"/>
</dbReference>
<dbReference type="RNAct" id="Q8K1S1">
    <property type="molecule type" value="protein"/>
</dbReference>
<dbReference type="Bgee" id="ENSMUSG00000036560">
    <property type="expression patterns" value="Expressed in cerebellar cortex and 120 other cell types or tissues"/>
</dbReference>
<dbReference type="ExpressionAtlas" id="Q8K1S1">
    <property type="expression patterns" value="baseline and differential"/>
</dbReference>
<dbReference type="GO" id="GO:0005615">
    <property type="term" value="C:extracellular space"/>
    <property type="evidence" value="ECO:0000314"/>
    <property type="project" value="MGI"/>
</dbReference>
<dbReference type="GO" id="GO:0008344">
    <property type="term" value="P:adult locomotory behavior"/>
    <property type="evidence" value="ECO:0000315"/>
    <property type="project" value="MGI"/>
</dbReference>
<dbReference type="GO" id="GO:0021782">
    <property type="term" value="P:glial cell development"/>
    <property type="evidence" value="ECO:0000315"/>
    <property type="project" value="MGI"/>
</dbReference>
<dbReference type="GO" id="GO:0014009">
    <property type="term" value="P:glial cell proliferation"/>
    <property type="evidence" value="ECO:0000314"/>
    <property type="project" value="MGI"/>
</dbReference>
<dbReference type="GO" id="GO:0042063">
    <property type="term" value="P:gliogenesis"/>
    <property type="evidence" value="ECO:0000315"/>
    <property type="project" value="MGI"/>
</dbReference>
<dbReference type="GO" id="GO:0042552">
    <property type="term" value="P:myelination"/>
    <property type="evidence" value="ECO:0000314"/>
    <property type="project" value="MGI"/>
</dbReference>
<dbReference type="GO" id="GO:0022011">
    <property type="term" value="P:myelination in peripheral nervous system"/>
    <property type="evidence" value="ECO:0000315"/>
    <property type="project" value="MGI"/>
</dbReference>
<dbReference type="GO" id="GO:0042551">
    <property type="term" value="P:neuron maturation"/>
    <property type="evidence" value="ECO:0000315"/>
    <property type="project" value="MGI"/>
</dbReference>
<dbReference type="GO" id="GO:0031641">
    <property type="term" value="P:regulation of myelination"/>
    <property type="evidence" value="ECO:0000314"/>
    <property type="project" value="UniProtKB"/>
</dbReference>
<dbReference type="GO" id="GO:0014044">
    <property type="term" value="P:Schwann cell development"/>
    <property type="evidence" value="ECO:0000315"/>
    <property type="project" value="MGI"/>
</dbReference>
<dbReference type="FunFam" id="3.80.10.10:FF:000017">
    <property type="entry name" value="leucine-rich repeat LGI family member 3"/>
    <property type="match status" value="1"/>
</dbReference>
<dbReference type="Gene3D" id="3.80.10.10">
    <property type="entry name" value="Ribonuclease Inhibitor"/>
    <property type="match status" value="1"/>
</dbReference>
<dbReference type="InterPro" id="IPR000483">
    <property type="entry name" value="Cys-rich_flank_reg_C"/>
</dbReference>
<dbReference type="InterPro" id="IPR009039">
    <property type="entry name" value="EAR"/>
</dbReference>
<dbReference type="InterPro" id="IPR005492">
    <property type="entry name" value="EPTP"/>
</dbReference>
<dbReference type="InterPro" id="IPR001611">
    <property type="entry name" value="Leu-rich_rpt"/>
</dbReference>
<dbReference type="InterPro" id="IPR003591">
    <property type="entry name" value="Leu-rich_rpt_typical-subtyp"/>
</dbReference>
<dbReference type="InterPro" id="IPR051295">
    <property type="entry name" value="LGI_related"/>
</dbReference>
<dbReference type="InterPro" id="IPR032675">
    <property type="entry name" value="LRR_dom_sf"/>
</dbReference>
<dbReference type="PANTHER" id="PTHR24367:SF268">
    <property type="entry name" value="LEUCINE-RICH REPEAT LGI FAMILY MEMBER 4"/>
    <property type="match status" value="1"/>
</dbReference>
<dbReference type="PANTHER" id="PTHR24367">
    <property type="entry name" value="LEUCINE-RICH REPEAT-CONTAINING PROTEIN"/>
    <property type="match status" value="1"/>
</dbReference>
<dbReference type="Pfam" id="PF03736">
    <property type="entry name" value="EPTP"/>
    <property type="match status" value="3"/>
</dbReference>
<dbReference type="Pfam" id="PF13855">
    <property type="entry name" value="LRR_8"/>
    <property type="match status" value="1"/>
</dbReference>
<dbReference type="SMART" id="SM00369">
    <property type="entry name" value="LRR_TYP"/>
    <property type="match status" value="3"/>
</dbReference>
<dbReference type="SMART" id="SM00082">
    <property type="entry name" value="LRRCT"/>
    <property type="match status" value="1"/>
</dbReference>
<dbReference type="SUPFAM" id="SSF52058">
    <property type="entry name" value="L domain-like"/>
    <property type="match status" value="1"/>
</dbReference>
<dbReference type="PROSITE" id="PS50912">
    <property type="entry name" value="EAR"/>
    <property type="match status" value="7"/>
</dbReference>
<feature type="signal peptide" evidence="1">
    <location>
        <begin position="1"/>
        <end position="19"/>
    </location>
</feature>
<feature type="chain" id="PRO_0000017713" description="Leucine-rich repeat LGI family member 4">
    <location>
        <begin position="20"/>
        <end position="537"/>
    </location>
</feature>
<feature type="repeat" description="LRR 1">
    <location>
        <begin position="53"/>
        <end position="74"/>
    </location>
</feature>
<feature type="repeat" description="LRR 2">
    <location>
        <begin position="77"/>
        <end position="98"/>
    </location>
</feature>
<feature type="repeat" description="LRR 3">
    <location>
        <begin position="101"/>
        <end position="122"/>
    </location>
</feature>
<feature type="repeat" description="LRR 4">
    <location>
        <begin position="125"/>
        <end position="146"/>
    </location>
</feature>
<feature type="domain" description="LRRCT">
    <location>
        <begin position="158"/>
        <end position="208"/>
    </location>
</feature>
<feature type="repeat" description="EAR 1" evidence="2">
    <location>
        <begin position="210"/>
        <end position="252"/>
    </location>
</feature>
<feature type="repeat" description="EAR 2" evidence="2">
    <location>
        <begin position="256"/>
        <end position="298"/>
    </location>
</feature>
<feature type="repeat" description="EAR 3" evidence="2">
    <location>
        <begin position="302"/>
        <end position="349"/>
    </location>
</feature>
<feature type="repeat" description="EAR 4" evidence="2">
    <location>
        <begin position="351"/>
        <end position="394"/>
    </location>
</feature>
<feature type="repeat" description="EAR 5" evidence="2">
    <location>
        <begin position="396"/>
        <end position="439"/>
    </location>
</feature>
<feature type="repeat" description="EAR 6" evidence="2">
    <location>
        <begin position="441"/>
        <end position="483"/>
    </location>
</feature>
<feature type="repeat" description="EAR 7" evidence="2">
    <location>
        <begin position="487"/>
        <end position="532"/>
    </location>
</feature>
<feature type="glycosylation site" description="N-linked (GlcNAc...) asparagine" evidence="1">
    <location>
        <position position="177"/>
    </location>
</feature>
<feature type="sequence conflict" description="In Ref. 2; CAD31789." evidence="5" ref="2">
    <original>CSC</original>
    <variation>SSS</variation>
    <location>
        <begin position="31"/>
        <end position="33"/>
    </location>
</feature>
<accession>Q8K1S1</accession>
<accession>Q8K4Y8</accession>
<name>LGI4_MOUSE</name>
<comment type="function">
    <text evidence="3">Component of Schwann cell signaling pathway(s) that controls axon segregation and myelin formation.</text>
</comment>
<comment type="subunit">
    <text>Can bind to ADAM11, ADAM22 and ADAM23.</text>
</comment>
<comment type="subcellular location">
    <subcellularLocation>
        <location evidence="5">Secreted</location>
    </subcellularLocation>
</comment>
<comment type="tissue specificity">
    <text evidence="3 4">Brain. Expressed in the entire developing peripheral nerves. Strongly expressed in the trigeminal nerve and ganglion and particularly abundant in the boundary cap cells - a transient population of cells that contributes to the Schwann cell population of the dorsal root nerve.</text>
</comment>
<comment type="developmental stage">
    <text>Expressed at 14 dpc.</text>
</comment>
<comment type="disease">
    <text evidence="3">Defects in Lgi4 are the cause of the claw paw (clp) phenotype. Mice are characterized by limb posture abnormalities and peripheral hypomyelination, with no sign of dysmyelination in the CNS.</text>
</comment>
<sequence length="537" mass="59377">MGGAGILLFLLAWAGAGVAWSPPKGKCPPHCSCSKENTLCEGSPELPESFSTTLLSLSLVRMGVSRLKAGSFLKMPSLHLLLFTSNTFSVIEGDAFIGLSYLQYLFIEDNKIGSISKNALRGLRSLTHLSLANNHLEALPRFLFRGLETLTHVDLRGNPFQCDCRVLWLLQWMPTVNASVGTGACAGPPAVAQIQLNHLDPKKFKCRATELSWLQTVGESALSVESFSYQGEPHMVLAQPFAGRCLILVWDYSLQRFRPEEELSAPSVVSCKPLVLGPRLFILAARLWGGSQLWSRSSPDLRLTPVQVLAPQRLLRPNDAELLWLDGQPCFVVADASKAGSTTLLCRDGPGFYPRQSLHAWHRDTDAEALELDGRPHLLLASASQRPVLFHWVGGRFERRTDIPEAEDVYATKHFQAGGDVFLCLTRYIGDSMVMRWDGSMFRLLQQLPSRGSHVFQPLLIARDQLAILGSDFAFSQVFRFESDKGILEPLQELGPPALVAPRAFAQVTVAGRRFLFAACFKGPTQIYQHHELDLSA</sequence>
<gene>
    <name type="primary">Lgi4</name>
    <name type="synonym">Lgil3</name>
</gene>
<organism>
    <name type="scientific">Mus musculus</name>
    <name type="common">Mouse</name>
    <dbReference type="NCBI Taxonomy" id="10090"/>
    <lineage>
        <taxon>Eukaryota</taxon>
        <taxon>Metazoa</taxon>
        <taxon>Chordata</taxon>
        <taxon>Craniata</taxon>
        <taxon>Vertebrata</taxon>
        <taxon>Euteleostomi</taxon>
        <taxon>Mammalia</taxon>
        <taxon>Eutheria</taxon>
        <taxon>Euarchontoglires</taxon>
        <taxon>Glires</taxon>
        <taxon>Rodentia</taxon>
        <taxon>Myomorpha</taxon>
        <taxon>Muroidea</taxon>
        <taxon>Muridae</taxon>
        <taxon>Murinae</taxon>
        <taxon>Mus</taxon>
        <taxon>Mus</taxon>
    </lineage>
</organism>
<keyword id="KW-0325">Glycoprotein</keyword>
<keyword id="KW-0433">Leucine-rich repeat</keyword>
<keyword id="KW-1185">Reference proteome</keyword>
<keyword id="KW-0677">Repeat</keyword>
<keyword id="KW-0964">Secreted</keyword>
<keyword id="KW-0732">Signal</keyword>
<reference key="1">
    <citation type="journal article" date="2002" name="Hum. Mol. Genet.">
        <title>A common protein interaction domain links two recently identified epilepsy genes.</title>
        <authorList>
            <person name="Scheel H."/>
            <person name="Tomiuk S."/>
            <person name="Hofmann K."/>
        </authorList>
    </citation>
    <scope>NUCLEOTIDE SEQUENCE [MRNA]</scope>
    <source>
        <strain>C57BL/6J</strain>
    </source>
</reference>
<reference key="2">
    <citation type="journal article" date="2002" name="Trends Biochem. Sci.">
        <title>The novel EPTP repeat defines a superfamily of proteins implicated in epileptic disorders.</title>
        <authorList>
            <person name="Staub E."/>
            <person name="Perez-Tur J."/>
            <person name="Siebert R."/>
            <person name="Nobile C."/>
            <person name="Moschonas N.K."/>
            <person name="Deloukas P."/>
            <person name="Hinzmann B."/>
        </authorList>
    </citation>
    <scope>NUCLEOTIDE SEQUENCE [MRNA]</scope>
    <source>
        <strain>C57BL/6J</strain>
    </source>
</reference>
<reference key="3">
    <citation type="journal article" date="2008" name="Int. J. Biol. Sci.">
        <title>LGI1 and LGI4 bind to ADAM22, ADAM23 and ADAM11.</title>
        <authorList>
            <person name="Sagane K."/>
            <person name="Ishihama Y."/>
            <person name="Sugimoto H."/>
        </authorList>
    </citation>
    <scope>INTERACTION WITH ADAM11; ADAM22 AND ADAM23</scope>
</reference>
<reference key="4">
    <citation type="journal article" date="2006" name="Nat. Neurosci.">
        <title>The claw paw mutation reveals a role for Lgi4 in peripheral nerve development.</title>
        <authorList>
            <person name="Bermingham J.R. Jr."/>
            <person name="Shearin H."/>
            <person name="Pennington J."/>
            <person name="O'Moore J."/>
            <person name="Jaegle M."/>
            <person name="Driegen S."/>
            <person name="van Zon A."/>
            <person name="Darbas A."/>
            <person name="Ozkaynak E."/>
            <person name="Ryu E.J."/>
            <person name="Milbrandt J."/>
            <person name="Meijer D."/>
        </authorList>
    </citation>
    <scope>FUNCTION</scope>
    <scope>TISSUE SPECIFICITY</scope>
    <scope>DEVELOPMENTAL STAGE</scope>
    <scope>INVOLVEMENT IN CLP PHENOTYPE</scope>
</reference>
<reference key="5">
    <citation type="journal article" date="2010" name="Brain Res.">
        <title>Regional distribution of the leucine-rich glioma inactivated (LGI) gene family transcripts in the adult mouse brain.</title>
        <authorList>
            <person name="Herranz-Perez V."/>
            <person name="Olucha-Bordonau F.E."/>
            <person name="Morante-Redolat J.M."/>
            <person name="Perez-Tur J."/>
        </authorList>
    </citation>
    <scope>TISSUE SPECIFICITY</scope>
</reference>
<protein>
    <recommendedName>
        <fullName>Leucine-rich repeat LGI family member 4</fullName>
    </recommendedName>
    <alternativeName>
        <fullName>LGI1-like protein 3</fullName>
    </alternativeName>
    <alternativeName>
        <fullName>Leucine-rich glioma-inactivated protein 4</fullName>
    </alternativeName>
</protein>
<evidence type="ECO:0000255" key="1"/>
<evidence type="ECO:0000255" key="2">
    <source>
        <dbReference type="PROSITE-ProRule" id="PRU00075"/>
    </source>
</evidence>
<evidence type="ECO:0000269" key="3">
    <source>
    </source>
</evidence>
<evidence type="ECO:0000269" key="4">
    <source>
    </source>
</evidence>
<evidence type="ECO:0000305" key="5"/>